<organism>
    <name type="scientific">Bordetella parapertussis (strain 12822 / ATCC BAA-587 / NCTC 13253)</name>
    <dbReference type="NCBI Taxonomy" id="257311"/>
    <lineage>
        <taxon>Bacteria</taxon>
        <taxon>Pseudomonadati</taxon>
        <taxon>Pseudomonadota</taxon>
        <taxon>Betaproteobacteria</taxon>
        <taxon>Burkholderiales</taxon>
        <taxon>Alcaligenaceae</taxon>
        <taxon>Bordetella</taxon>
    </lineage>
</organism>
<name>NUOD_BORPA</name>
<evidence type="ECO:0000255" key="1">
    <source>
        <dbReference type="HAMAP-Rule" id="MF_01358"/>
    </source>
</evidence>
<reference key="1">
    <citation type="journal article" date="2003" name="Nat. Genet.">
        <title>Comparative analysis of the genome sequences of Bordetella pertussis, Bordetella parapertussis and Bordetella bronchiseptica.</title>
        <authorList>
            <person name="Parkhill J."/>
            <person name="Sebaihia M."/>
            <person name="Preston A."/>
            <person name="Murphy L.D."/>
            <person name="Thomson N.R."/>
            <person name="Harris D.E."/>
            <person name="Holden M.T.G."/>
            <person name="Churcher C.M."/>
            <person name="Bentley S.D."/>
            <person name="Mungall K.L."/>
            <person name="Cerdeno-Tarraga A.-M."/>
            <person name="Temple L."/>
            <person name="James K.D."/>
            <person name="Harris B."/>
            <person name="Quail M.A."/>
            <person name="Achtman M."/>
            <person name="Atkin R."/>
            <person name="Baker S."/>
            <person name="Basham D."/>
            <person name="Bason N."/>
            <person name="Cherevach I."/>
            <person name="Chillingworth T."/>
            <person name="Collins M."/>
            <person name="Cronin A."/>
            <person name="Davis P."/>
            <person name="Doggett J."/>
            <person name="Feltwell T."/>
            <person name="Goble A."/>
            <person name="Hamlin N."/>
            <person name="Hauser H."/>
            <person name="Holroyd S."/>
            <person name="Jagels K."/>
            <person name="Leather S."/>
            <person name="Moule S."/>
            <person name="Norberczak H."/>
            <person name="O'Neil S."/>
            <person name="Ormond D."/>
            <person name="Price C."/>
            <person name="Rabbinowitsch E."/>
            <person name="Rutter S."/>
            <person name="Sanders M."/>
            <person name="Saunders D."/>
            <person name="Seeger K."/>
            <person name="Sharp S."/>
            <person name="Simmonds M."/>
            <person name="Skelton J."/>
            <person name="Squares R."/>
            <person name="Squares S."/>
            <person name="Stevens K."/>
            <person name="Unwin L."/>
            <person name="Whitehead S."/>
            <person name="Barrell B.G."/>
            <person name="Maskell D.J."/>
        </authorList>
    </citation>
    <scope>NUCLEOTIDE SEQUENCE [LARGE SCALE GENOMIC DNA]</scope>
    <source>
        <strain>12822 / ATCC BAA-587 / NCTC 13253</strain>
    </source>
</reference>
<keyword id="KW-0997">Cell inner membrane</keyword>
<keyword id="KW-1003">Cell membrane</keyword>
<keyword id="KW-0472">Membrane</keyword>
<keyword id="KW-0520">NAD</keyword>
<keyword id="KW-0874">Quinone</keyword>
<keyword id="KW-1278">Translocase</keyword>
<keyword id="KW-0813">Transport</keyword>
<keyword id="KW-0830">Ubiquinone</keyword>
<sequence length="418" mass="47428">MAEIKNYTLNFGPQHPAAHGVLRLVLELDGEVIQRADPHIGLLHRATEKLAEHKTFIQALPYMDRLDYVSMMCNEHAYVMAIEKLLGIEAPLRAQYIRVMFDEITRVLNHLMSLGSHALDVGAMAVFLYAFREREDLMDCYEAVSGARMHAAYYRPGGVYRDLPDTMPQYGDSSKYRGEKEVRAMNDARSGSLLDFIEDFTNRFPGCVDEYETLLTDNRIWKQRLVGIGVVDPDRAKALGFTGPMLRGSGVAWDLRKTQPYEVYDLMDFDVPVGVNGDCYDRYLVRVAEMRESNRIIRQCVEWLRNNPGPVMIENHKIAPPSRTAMKSNMEELIHHFKLFSEGFHVPPGEAYAAVEHPKGEFGIYLVADGANKPYRLKIRAPGFAHLQSLDEMARGHMIADAVTIIGTQDIVFGEIDR</sequence>
<gene>
    <name evidence="1" type="primary">nuoD</name>
    <name type="ordered locus">BPP3388</name>
</gene>
<protein>
    <recommendedName>
        <fullName evidence="1">NADH-quinone oxidoreductase subunit D</fullName>
        <ecNumber evidence="1">7.1.1.-</ecNumber>
    </recommendedName>
    <alternativeName>
        <fullName evidence="1">NADH dehydrogenase I subunit D</fullName>
    </alternativeName>
    <alternativeName>
        <fullName evidence="1">NDH-1 subunit D</fullName>
    </alternativeName>
</protein>
<accession>Q7W5B0</accession>
<comment type="function">
    <text evidence="1">NDH-1 shuttles electrons from NADH, via FMN and iron-sulfur (Fe-S) centers, to quinones in the respiratory chain. The immediate electron acceptor for the enzyme in this species is believed to be ubiquinone. Couples the redox reaction to proton translocation (for every two electrons transferred, four hydrogen ions are translocated across the cytoplasmic membrane), and thus conserves the redox energy in a proton gradient.</text>
</comment>
<comment type="catalytic activity">
    <reaction evidence="1">
        <text>a quinone + NADH + 5 H(+)(in) = a quinol + NAD(+) + 4 H(+)(out)</text>
        <dbReference type="Rhea" id="RHEA:57888"/>
        <dbReference type="ChEBI" id="CHEBI:15378"/>
        <dbReference type="ChEBI" id="CHEBI:24646"/>
        <dbReference type="ChEBI" id="CHEBI:57540"/>
        <dbReference type="ChEBI" id="CHEBI:57945"/>
        <dbReference type="ChEBI" id="CHEBI:132124"/>
    </reaction>
</comment>
<comment type="subunit">
    <text evidence="1">NDH-1 is composed of 14 different subunits. Subunits NuoB, C, D, E, F, and G constitute the peripheral sector of the complex.</text>
</comment>
<comment type="subcellular location">
    <subcellularLocation>
        <location evidence="1">Cell inner membrane</location>
        <topology evidence="1">Peripheral membrane protein</topology>
        <orientation evidence="1">Cytoplasmic side</orientation>
    </subcellularLocation>
</comment>
<comment type="similarity">
    <text evidence="1">Belongs to the complex I 49 kDa subunit family.</text>
</comment>
<dbReference type="EC" id="7.1.1.-" evidence="1"/>
<dbReference type="EMBL" id="BX640433">
    <property type="protein sequence ID" value="CAE38673.1"/>
    <property type="molecule type" value="Genomic_DNA"/>
</dbReference>
<dbReference type="RefSeq" id="WP_003813935.1">
    <property type="nucleotide sequence ID" value="NC_002928.3"/>
</dbReference>
<dbReference type="SMR" id="Q7W5B0"/>
<dbReference type="KEGG" id="bpa:BPP3388"/>
<dbReference type="HOGENOM" id="CLU_015134_1_1_4"/>
<dbReference type="Proteomes" id="UP000001421">
    <property type="component" value="Chromosome"/>
</dbReference>
<dbReference type="GO" id="GO:0005886">
    <property type="term" value="C:plasma membrane"/>
    <property type="evidence" value="ECO:0007669"/>
    <property type="project" value="UniProtKB-SubCell"/>
</dbReference>
<dbReference type="GO" id="GO:0051287">
    <property type="term" value="F:NAD binding"/>
    <property type="evidence" value="ECO:0007669"/>
    <property type="project" value="InterPro"/>
</dbReference>
<dbReference type="GO" id="GO:0050136">
    <property type="term" value="F:NADH:ubiquinone reductase (non-electrogenic) activity"/>
    <property type="evidence" value="ECO:0007669"/>
    <property type="project" value="UniProtKB-UniRule"/>
</dbReference>
<dbReference type="GO" id="GO:0048038">
    <property type="term" value="F:quinone binding"/>
    <property type="evidence" value="ECO:0007669"/>
    <property type="project" value="UniProtKB-KW"/>
</dbReference>
<dbReference type="FunFam" id="1.10.645.10:FF:000005">
    <property type="entry name" value="NADH-quinone oxidoreductase subunit D"/>
    <property type="match status" value="1"/>
</dbReference>
<dbReference type="Gene3D" id="1.10.645.10">
    <property type="entry name" value="Cytochrome-c3 Hydrogenase, chain B"/>
    <property type="match status" value="1"/>
</dbReference>
<dbReference type="HAMAP" id="MF_01358">
    <property type="entry name" value="NDH1_NuoD"/>
    <property type="match status" value="1"/>
</dbReference>
<dbReference type="InterPro" id="IPR001135">
    <property type="entry name" value="NADH_Q_OxRdtase_suD"/>
</dbReference>
<dbReference type="InterPro" id="IPR014029">
    <property type="entry name" value="NADH_UbQ_OxRdtase_49kDa_CS"/>
</dbReference>
<dbReference type="InterPro" id="IPR022885">
    <property type="entry name" value="NDH1_su_D/H"/>
</dbReference>
<dbReference type="InterPro" id="IPR029014">
    <property type="entry name" value="NiFe-Hase_large"/>
</dbReference>
<dbReference type="NCBIfam" id="TIGR01962">
    <property type="entry name" value="NuoD"/>
    <property type="match status" value="1"/>
</dbReference>
<dbReference type="NCBIfam" id="NF004739">
    <property type="entry name" value="PRK06075.1"/>
    <property type="match status" value="1"/>
</dbReference>
<dbReference type="PANTHER" id="PTHR11993:SF10">
    <property type="entry name" value="NADH DEHYDROGENASE [UBIQUINONE] IRON-SULFUR PROTEIN 2, MITOCHONDRIAL"/>
    <property type="match status" value="1"/>
</dbReference>
<dbReference type="PANTHER" id="PTHR11993">
    <property type="entry name" value="NADH-UBIQUINONE OXIDOREDUCTASE 49 KDA SUBUNIT"/>
    <property type="match status" value="1"/>
</dbReference>
<dbReference type="Pfam" id="PF00346">
    <property type="entry name" value="Complex1_49kDa"/>
    <property type="match status" value="1"/>
</dbReference>
<dbReference type="SUPFAM" id="SSF56762">
    <property type="entry name" value="HydB/Nqo4-like"/>
    <property type="match status" value="1"/>
</dbReference>
<dbReference type="PROSITE" id="PS00535">
    <property type="entry name" value="COMPLEX1_49K"/>
    <property type="match status" value="1"/>
</dbReference>
<feature type="chain" id="PRO_0000371820" description="NADH-quinone oxidoreductase subunit D">
    <location>
        <begin position="1"/>
        <end position="418"/>
    </location>
</feature>
<proteinExistence type="inferred from homology"/>